<accession>P38962</accession>
<accession>D6VS71</accession>
<proteinExistence type="evidence at protein level"/>
<organism>
    <name type="scientific">Saccharomyces cerevisiae (strain ATCC 204508 / S288c)</name>
    <name type="common">Baker's yeast</name>
    <dbReference type="NCBI Taxonomy" id="559292"/>
    <lineage>
        <taxon>Eukaryota</taxon>
        <taxon>Fungi</taxon>
        <taxon>Dikarya</taxon>
        <taxon>Ascomycota</taxon>
        <taxon>Saccharomycotina</taxon>
        <taxon>Saccharomycetes</taxon>
        <taxon>Saccharomycetales</taxon>
        <taxon>Saccharomycetaceae</taxon>
        <taxon>Saccharomyces</taxon>
    </lineage>
</organism>
<gene>
    <name type="primary">TVP23</name>
    <name type="ordered locus">YDR084C</name>
    <name type="ORF">D4466</name>
</gene>
<comment type="function">
    <text evidence="4">Golgi membrane protein involved in vesicular trafficking.</text>
</comment>
<comment type="subunit">
    <text evidence="4">Interacts with YIP4 and YIP5.</text>
</comment>
<comment type="subcellular location">
    <subcellularLocation>
        <location evidence="3 4">Golgi apparatus membrane</location>
        <topology evidence="3 4">Multi-pass membrane protein</topology>
    </subcellularLocation>
</comment>
<comment type="miscellaneous">
    <text evidence="2">Present with 1040 molecules/cell in log phase SD medium.</text>
</comment>
<comment type="similarity">
    <text evidence="5">Belongs to the TVP23 family.</text>
</comment>
<dbReference type="EMBL" id="Z46796">
    <property type="protein sequence ID" value="CAA86806.1"/>
    <property type="molecule type" value="Genomic_DNA"/>
</dbReference>
<dbReference type="EMBL" id="X82086">
    <property type="protein sequence ID" value="CAA57611.1"/>
    <property type="molecule type" value="Genomic_DNA"/>
</dbReference>
<dbReference type="EMBL" id="Z74380">
    <property type="protein sequence ID" value="CAA98904.1"/>
    <property type="molecule type" value="Genomic_DNA"/>
</dbReference>
<dbReference type="EMBL" id="AY557674">
    <property type="protein sequence ID" value="AAS56000.1"/>
    <property type="molecule type" value="Genomic_DNA"/>
</dbReference>
<dbReference type="EMBL" id="BK006938">
    <property type="protein sequence ID" value="DAA11931.1"/>
    <property type="molecule type" value="Genomic_DNA"/>
</dbReference>
<dbReference type="PIR" id="S48771">
    <property type="entry name" value="S48771"/>
</dbReference>
<dbReference type="RefSeq" id="NP_010369.3">
    <property type="nucleotide sequence ID" value="NM_001180392.3"/>
</dbReference>
<dbReference type="BioGRID" id="32140">
    <property type="interactions" value="60"/>
</dbReference>
<dbReference type="DIP" id="DIP-1822N"/>
<dbReference type="FunCoup" id="P38962">
    <property type="interactions" value="482"/>
</dbReference>
<dbReference type="IntAct" id="P38962">
    <property type="interactions" value="16"/>
</dbReference>
<dbReference type="MINT" id="P38962"/>
<dbReference type="STRING" id="4932.YDR084C"/>
<dbReference type="GlyCosmos" id="P38962">
    <property type="glycosylation" value="3 sites, No reported glycans"/>
</dbReference>
<dbReference type="GlyGen" id="P38962">
    <property type="glycosylation" value="3 sites"/>
</dbReference>
<dbReference type="PaxDb" id="4932-YDR084C"/>
<dbReference type="PeptideAtlas" id="P38962"/>
<dbReference type="EnsemblFungi" id="YDR084C_mRNA">
    <property type="protein sequence ID" value="YDR084C"/>
    <property type="gene ID" value="YDR084C"/>
</dbReference>
<dbReference type="GeneID" id="851657"/>
<dbReference type="KEGG" id="sce:YDR084C"/>
<dbReference type="AGR" id="SGD:S000002491"/>
<dbReference type="SGD" id="S000002491">
    <property type="gene designation" value="TVP23"/>
</dbReference>
<dbReference type="VEuPathDB" id="FungiDB:YDR084C"/>
<dbReference type="eggNOG" id="KOG3195">
    <property type="taxonomic scope" value="Eukaryota"/>
</dbReference>
<dbReference type="GeneTree" id="ENSGT00390000004428"/>
<dbReference type="HOGENOM" id="CLU_1190470_0_0_1"/>
<dbReference type="InParanoid" id="P38962"/>
<dbReference type="OMA" id="KMIWWID"/>
<dbReference type="OrthoDB" id="2151161at2759"/>
<dbReference type="BioCyc" id="YEAST:G3O-29689-MONOMER"/>
<dbReference type="BioGRID-ORCS" id="851657">
    <property type="hits" value="0 hits in 10 CRISPR screens"/>
</dbReference>
<dbReference type="PRO" id="PR:P38962"/>
<dbReference type="Proteomes" id="UP000002311">
    <property type="component" value="Chromosome IV"/>
</dbReference>
<dbReference type="RNAct" id="P38962">
    <property type="molecule type" value="protein"/>
</dbReference>
<dbReference type="GO" id="GO:0005737">
    <property type="term" value="C:cytoplasm"/>
    <property type="evidence" value="ECO:0007005"/>
    <property type="project" value="SGD"/>
</dbReference>
<dbReference type="GO" id="GO:0000139">
    <property type="term" value="C:Golgi membrane"/>
    <property type="evidence" value="ECO:0000314"/>
    <property type="project" value="SGD"/>
</dbReference>
<dbReference type="GO" id="GO:0009306">
    <property type="term" value="P:protein secretion"/>
    <property type="evidence" value="ECO:0000318"/>
    <property type="project" value="GO_Central"/>
</dbReference>
<dbReference type="GO" id="GO:0016192">
    <property type="term" value="P:vesicle-mediated transport"/>
    <property type="evidence" value="ECO:0000316"/>
    <property type="project" value="SGD"/>
</dbReference>
<dbReference type="InterPro" id="IPR008564">
    <property type="entry name" value="TVP23-like"/>
</dbReference>
<dbReference type="PANTHER" id="PTHR13019">
    <property type="entry name" value="GOLGI APPARATUS MEMBRANE PROTEIN TVP23"/>
    <property type="match status" value="1"/>
</dbReference>
<dbReference type="PANTHER" id="PTHR13019:SF7">
    <property type="entry name" value="GOLGI APPARATUS MEMBRANE PROTEIN TVP23"/>
    <property type="match status" value="1"/>
</dbReference>
<dbReference type="Pfam" id="PF05832">
    <property type="entry name" value="DUF846"/>
    <property type="match status" value="1"/>
</dbReference>
<protein>
    <recommendedName>
        <fullName>Golgi apparatus membrane protein TVP23</fullName>
    </recommendedName>
    <alternativeName>
        <fullName>TLG2 compartment vesicle protein of 23 kDa</fullName>
    </alternativeName>
</protein>
<sequence>MDQARNFYNTILKSSHPLLLSFHLAGKAVPIVFYIIGSMFLNFTPQFITVVLLLSFDFYLTKNITGRKLVQLRWWYDSTDVNKDSNFTFESYKQYAPGPPINAIDSKLFWWSMYVTPVIWGVFAVLCLLRLKIFYLILVIVAMCLTAWNTYGFRCCDRWEPNSGQSDGQDTNNWFALPSVPGFENLSRLANIQSFFQRQ</sequence>
<reference key="1">
    <citation type="journal article" date="1997" name="Nature">
        <title>The nucleotide sequence of Saccharomyces cerevisiae chromosome IV.</title>
        <authorList>
            <person name="Jacq C."/>
            <person name="Alt-Moerbe J."/>
            <person name="Andre B."/>
            <person name="Arnold W."/>
            <person name="Bahr A."/>
            <person name="Ballesta J.P.G."/>
            <person name="Bargues M."/>
            <person name="Baron L."/>
            <person name="Becker A."/>
            <person name="Biteau N."/>
            <person name="Bloecker H."/>
            <person name="Blugeon C."/>
            <person name="Boskovic J."/>
            <person name="Brandt P."/>
            <person name="Brueckner M."/>
            <person name="Buitrago M.J."/>
            <person name="Coster F."/>
            <person name="Delaveau T."/>
            <person name="del Rey F."/>
            <person name="Dujon B."/>
            <person name="Eide L.G."/>
            <person name="Garcia-Cantalejo J.M."/>
            <person name="Goffeau A."/>
            <person name="Gomez-Peris A."/>
            <person name="Granotier C."/>
            <person name="Hanemann V."/>
            <person name="Hankeln T."/>
            <person name="Hoheisel J.D."/>
            <person name="Jaeger W."/>
            <person name="Jimenez A."/>
            <person name="Jonniaux J.-L."/>
            <person name="Kraemer C."/>
            <person name="Kuester H."/>
            <person name="Laamanen P."/>
            <person name="Legros Y."/>
            <person name="Louis E.J."/>
            <person name="Moeller-Rieker S."/>
            <person name="Monnet A."/>
            <person name="Moro M."/>
            <person name="Mueller-Auer S."/>
            <person name="Nussbaumer B."/>
            <person name="Paricio N."/>
            <person name="Paulin L."/>
            <person name="Perea J."/>
            <person name="Perez-Alonso M."/>
            <person name="Perez-Ortin J.E."/>
            <person name="Pohl T.M."/>
            <person name="Prydz H."/>
            <person name="Purnelle B."/>
            <person name="Rasmussen S.W."/>
            <person name="Remacha M.A."/>
            <person name="Revuelta J.L."/>
            <person name="Rieger M."/>
            <person name="Salom D."/>
            <person name="Saluz H.P."/>
            <person name="Saiz J.E."/>
            <person name="Saren A.-M."/>
            <person name="Schaefer M."/>
            <person name="Scharfe M."/>
            <person name="Schmidt E.R."/>
            <person name="Schneider C."/>
            <person name="Scholler P."/>
            <person name="Schwarz S."/>
            <person name="Soler-Mira A."/>
            <person name="Urrestarazu L.A."/>
            <person name="Verhasselt P."/>
            <person name="Vissers S."/>
            <person name="Voet M."/>
            <person name="Volckaert G."/>
            <person name="Wagner G."/>
            <person name="Wambutt R."/>
            <person name="Wedler E."/>
            <person name="Wedler H."/>
            <person name="Woelfl S."/>
            <person name="Harris D.E."/>
            <person name="Bowman S."/>
            <person name="Brown D."/>
            <person name="Churcher C.M."/>
            <person name="Connor R."/>
            <person name="Dedman K."/>
            <person name="Gentles S."/>
            <person name="Hamlin N."/>
            <person name="Hunt S."/>
            <person name="Jones L."/>
            <person name="McDonald S."/>
            <person name="Murphy L.D."/>
            <person name="Niblett D."/>
            <person name="Odell C."/>
            <person name="Oliver K."/>
            <person name="Rajandream M.A."/>
            <person name="Richards C."/>
            <person name="Shore L."/>
            <person name="Walsh S.V."/>
            <person name="Barrell B.G."/>
            <person name="Dietrich F.S."/>
            <person name="Mulligan J.T."/>
            <person name="Allen E."/>
            <person name="Araujo R."/>
            <person name="Aviles E."/>
            <person name="Berno A."/>
            <person name="Carpenter J."/>
            <person name="Chen E."/>
            <person name="Cherry J.M."/>
            <person name="Chung E."/>
            <person name="Duncan M."/>
            <person name="Hunicke-Smith S."/>
            <person name="Hyman R.W."/>
            <person name="Komp C."/>
            <person name="Lashkari D."/>
            <person name="Lew H."/>
            <person name="Lin D."/>
            <person name="Mosedale D."/>
            <person name="Nakahara K."/>
            <person name="Namath A."/>
            <person name="Oefner P."/>
            <person name="Oh C."/>
            <person name="Petel F.X."/>
            <person name="Roberts D."/>
            <person name="Schramm S."/>
            <person name="Schroeder M."/>
            <person name="Shogren T."/>
            <person name="Shroff N."/>
            <person name="Winant A."/>
            <person name="Yelton M.A."/>
            <person name="Botstein D."/>
            <person name="Davis R.W."/>
            <person name="Johnston M."/>
            <person name="Andrews S."/>
            <person name="Brinkman R."/>
            <person name="Cooper J."/>
            <person name="Ding H."/>
            <person name="Du Z."/>
            <person name="Favello A."/>
            <person name="Fulton L."/>
            <person name="Gattung S."/>
            <person name="Greco T."/>
            <person name="Hallsworth K."/>
            <person name="Hawkins J."/>
            <person name="Hillier L.W."/>
            <person name="Jier M."/>
            <person name="Johnson D."/>
            <person name="Johnston L."/>
            <person name="Kirsten J."/>
            <person name="Kucaba T."/>
            <person name="Langston Y."/>
            <person name="Latreille P."/>
            <person name="Le T."/>
            <person name="Mardis E."/>
            <person name="Menezes S."/>
            <person name="Miller N."/>
            <person name="Nhan M."/>
            <person name="Pauley A."/>
            <person name="Peluso D."/>
            <person name="Rifkin L."/>
            <person name="Riles L."/>
            <person name="Taich A."/>
            <person name="Trevaskis E."/>
            <person name="Vignati D."/>
            <person name="Wilcox L."/>
            <person name="Wohldman P."/>
            <person name="Vaudin M."/>
            <person name="Wilson R."/>
            <person name="Waterston R."/>
            <person name="Albermann K."/>
            <person name="Hani J."/>
            <person name="Heumann K."/>
            <person name="Kleine K."/>
            <person name="Mewes H.-W."/>
            <person name="Zollner A."/>
            <person name="Zaccaria P."/>
        </authorList>
    </citation>
    <scope>NUCLEOTIDE SEQUENCE [LARGE SCALE GENOMIC DNA]</scope>
    <source>
        <strain>ATCC 204508 / S288c</strain>
    </source>
</reference>
<reference key="2">
    <citation type="journal article" date="2014" name="G3 (Bethesda)">
        <title>The reference genome sequence of Saccharomyces cerevisiae: Then and now.</title>
        <authorList>
            <person name="Engel S.R."/>
            <person name="Dietrich F.S."/>
            <person name="Fisk D.G."/>
            <person name="Binkley G."/>
            <person name="Balakrishnan R."/>
            <person name="Costanzo M.C."/>
            <person name="Dwight S.S."/>
            <person name="Hitz B.C."/>
            <person name="Karra K."/>
            <person name="Nash R.S."/>
            <person name="Weng S."/>
            <person name="Wong E.D."/>
            <person name="Lloyd P."/>
            <person name="Skrzypek M.S."/>
            <person name="Miyasato S.R."/>
            <person name="Simison M."/>
            <person name="Cherry J.M."/>
        </authorList>
    </citation>
    <scope>GENOME REANNOTATION</scope>
    <source>
        <strain>ATCC 204508 / S288c</strain>
    </source>
</reference>
<reference key="3">
    <citation type="journal article" date="2007" name="Genome Res.">
        <title>Approaching a complete repository of sequence-verified protein-encoding clones for Saccharomyces cerevisiae.</title>
        <authorList>
            <person name="Hu Y."/>
            <person name="Rolfs A."/>
            <person name="Bhullar B."/>
            <person name="Murthy T.V.S."/>
            <person name="Zhu C."/>
            <person name="Berger M.F."/>
            <person name="Camargo A.A."/>
            <person name="Kelley F."/>
            <person name="McCarron S."/>
            <person name="Jepson D."/>
            <person name="Richardson A."/>
            <person name="Raphael J."/>
            <person name="Moreira D."/>
            <person name="Taycher E."/>
            <person name="Zuo D."/>
            <person name="Mohr S."/>
            <person name="Kane M.F."/>
            <person name="Williamson J."/>
            <person name="Simpson A.J.G."/>
            <person name="Bulyk M.L."/>
            <person name="Harlow E."/>
            <person name="Marsischky G."/>
            <person name="Kolodner R.D."/>
            <person name="LaBaer J."/>
        </authorList>
    </citation>
    <scope>NUCLEOTIDE SEQUENCE [GENOMIC DNA]</scope>
    <source>
        <strain>ATCC 204508 / S288c</strain>
    </source>
</reference>
<reference key="4">
    <citation type="journal article" date="2003" name="Nature">
        <title>Global analysis of protein expression in yeast.</title>
        <authorList>
            <person name="Ghaemmaghami S."/>
            <person name="Huh W.-K."/>
            <person name="Bower K."/>
            <person name="Howson R.W."/>
            <person name="Belle A."/>
            <person name="Dephoure N."/>
            <person name="O'Shea E.K."/>
            <person name="Weissman J.S."/>
        </authorList>
    </citation>
    <scope>LEVEL OF PROTEIN EXPRESSION [LARGE SCALE ANALYSIS]</scope>
</reference>
<reference key="5">
    <citation type="journal article" date="2005" name="Mol. Cell. Biol.">
        <title>Immunoisolation of the yeast Golgi subcompartments and characterization of a novel membrane protein, Svp26, discovered in the Sed5-containing compartments.</title>
        <authorList>
            <person name="Inadome H."/>
            <person name="Noda Y."/>
            <person name="Adachi H."/>
            <person name="Yoda K."/>
        </authorList>
    </citation>
    <scope>SUBCELLULAR LOCATION</scope>
    <scope>IDENTIFICATION BY MASS SPECTROMETRY</scope>
</reference>
<reference key="6">
    <citation type="journal article" date="2007" name="Exp. Cell Res.">
        <title>Tvp38, Tvp23, Tvp18 and Tvp15: novel membrane proteins in the Tlg2-containing Golgi/endosome compartments of Saccharomyces cerevisiae.</title>
        <authorList>
            <person name="Inadome H."/>
            <person name="Noda Y."/>
            <person name="Kamimura Y."/>
            <person name="Adachi H."/>
            <person name="Yoda K."/>
        </authorList>
    </citation>
    <scope>FUNCTION</scope>
    <scope>SUBCELLULAR LOCATION</scope>
    <scope>INTERACTION WITH YIP4 AND YIP5</scope>
</reference>
<evidence type="ECO:0000255" key="1"/>
<evidence type="ECO:0000269" key="2">
    <source>
    </source>
</evidence>
<evidence type="ECO:0000269" key="3">
    <source>
    </source>
</evidence>
<evidence type="ECO:0000269" key="4">
    <source>
    </source>
</evidence>
<evidence type="ECO:0000305" key="5"/>
<name>TVP23_YEAST</name>
<feature type="chain" id="PRO_0000212837" description="Golgi apparatus membrane protein TVP23">
    <location>
        <begin position="1"/>
        <end position="199"/>
    </location>
</feature>
<feature type="transmembrane region" description="Helical" evidence="1">
    <location>
        <begin position="18"/>
        <end position="36"/>
    </location>
</feature>
<feature type="transmembrane region" description="Helical" evidence="1">
    <location>
        <begin position="43"/>
        <end position="60"/>
    </location>
</feature>
<feature type="transmembrane region" description="Helical" evidence="1">
    <location>
        <begin position="108"/>
        <end position="128"/>
    </location>
</feature>
<feature type="transmembrane region" description="Helical" evidence="1">
    <location>
        <begin position="133"/>
        <end position="153"/>
    </location>
</feature>
<feature type="glycosylation site" description="N-linked (GlcNAc...) asparagine" evidence="1">
    <location>
        <position position="63"/>
    </location>
</feature>
<feature type="glycosylation site" description="N-linked (GlcNAc...) asparagine" evidence="1">
    <location>
        <position position="86"/>
    </location>
</feature>
<feature type="glycosylation site" description="N-linked (GlcNAc...) asparagine" evidence="1">
    <location>
        <position position="185"/>
    </location>
</feature>
<keyword id="KW-0325">Glycoprotein</keyword>
<keyword id="KW-0333">Golgi apparatus</keyword>
<keyword id="KW-0472">Membrane</keyword>
<keyword id="KW-1185">Reference proteome</keyword>
<keyword id="KW-0812">Transmembrane</keyword>
<keyword id="KW-1133">Transmembrane helix</keyword>